<proteinExistence type="inferred from homology"/>
<protein>
    <recommendedName>
        <fullName evidence="1">LPS-assembly protein LptD</fullName>
    </recommendedName>
</protein>
<dbReference type="EMBL" id="AE016825">
    <property type="protein sequence ID" value="AAQ61889.1"/>
    <property type="status" value="ALT_INIT"/>
    <property type="molecule type" value="Genomic_DNA"/>
</dbReference>
<dbReference type="RefSeq" id="WP_011137775.1">
    <property type="nucleotide sequence ID" value="NC_005085.1"/>
</dbReference>
<dbReference type="SMR" id="Q7NQB1"/>
<dbReference type="STRING" id="243365.CV_4229"/>
<dbReference type="KEGG" id="cvi:CV_4229"/>
<dbReference type="eggNOG" id="COG1452">
    <property type="taxonomic scope" value="Bacteria"/>
</dbReference>
<dbReference type="HOGENOM" id="CLU_009039_0_0_4"/>
<dbReference type="OrthoDB" id="9760225at2"/>
<dbReference type="Proteomes" id="UP000001424">
    <property type="component" value="Chromosome"/>
</dbReference>
<dbReference type="GO" id="GO:0009279">
    <property type="term" value="C:cell outer membrane"/>
    <property type="evidence" value="ECO:0007669"/>
    <property type="project" value="UniProtKB-SubCell"/>
</dbReference>
<dbReference type="GO" id="GO:1990351">
    <property type="term" value="C:transporter complex"/>
    <property type="evidence" value="ECO:0007669"/>
    <property type="project" value="TreeGrafter"/>
</dbReference>
<dbReference type="GO" id="GO:0043165">
    <property type="term" value="P:Gram-negative-bacterium-type cell outer membrane assembly"/>
    <property type="evidence" value="ECO:0007669"/>
    <property type="project" value="UniProtKB-UniRule"/>
</dbReference>
<dbReference type="GO" id="GO:0015920">
    <property type="term" value="P:lipopolysaccharide transport"/>
    <property type="evidence" value="ECO:0007669"/>
    <property type="project" value="InterPro"/>
</dbReference>
<dbReference type="Gene3D" id="2.60.450.10">
    <property type="entry name" value="Lipopolysaccharide (LPS) transport protein A like domain"/>
    <property type="match status" value="1"/>
</dbReference>
<dbReference type="HAMAP" id="MF_01411">
    <property type="entry name" value="LPS_assembly_LptD"/>
    <property type="match status" value="1"/>
</dbReference>
<dbReference type="InterPro" id="IPR020889">
    <property type="entry name" value="LipoPS_assembly_LptD"/>
</dbReference>
<dbReference type="InterPro" id="IPR050218">
    <property type="entry name" value="LptD"/>
</dbReference>
<dbReference type="InterPro" id="IPR007543">
    <property type="entry name" value="LptD_C"/>
</dbReference>
<dbReference type="PANTHER" id="PTHR30189">
    <property type="entry name" value="LPS-ASSEMBLY PROTEIN"/>
    <property type="match status" value="1"/>
</dbReference>
<dbReference type="PANTHER" id="PTHR30189:SF1">
    <property type="entry name" value="LPS-ASSEMBLY PROTEIN LPTD"/>
    <property type="match status" value="1"/>
</dbReference>
<dbReference type="Pfam" id="PF04453">
    <property type="entry name" value="LptD"/>
    <property type="match status" value="1"/>
</dbReference>
<accession>Q7NQB1</accession>
<gene>
    <name evidence="1" type="primary">lptD</name>
    <name type="synonym">imp</name>
    <name type="synonym">ostA</name>
    <name type="ordered locus">CV_4229</name>
</gene>
<reference key="1">
    <citation type="journal article" date="2003" name="Proc. Natl. Acad. Sci. U.S.A.">
        <title>The complete genome sequence of Chromobacterium violaceum reveals remarkable and exploitable bacterial adaptability.</title>
        <authorList>
            <person name="Vasconcelos A.T.R."/>
            <person name="de Almeida D.F."/>
            <person name="Hungria M."/>
            <person name="Guimaraes C.T."/>
            <person name="Antonio R.V."/>
            <person name="Almeida F.C."/>
            <person name="de Almeida L.G.P."/>
            <person name="de Almeida R."/>
            <person name="Alves-Gomes J.A."/>
            <person name="Andrade E.M."/>
            <person name="Araripe J."/>
            <person name="de Araujo M.F.F."/>
            <person name="Astolfi-Filho S."/>
            <person name="Azevedo V."/>
            <person name="Baptista A.J."/>
            <person name="Bataus L.A.M."/>
            <person name="Batista J.S."/>
            <person name="Belo A."/>
            <person name="van den Berg C."/>
            <person name="Bogo M."/>
            <person name="Bonatto S."/>
            <person name="Bordignon J."/>
            <person name="Brigido M.M."/>
            <person name="Brito C.A."/>
            <person name="Brocchi M."/>
            <person name="Burity H.A."/>
            <person name="Camargo A.A."/>
            <person name="Cardoso D.D.P."/>
            <person name="Carneiro N.P."/>
            <person name="Carraro D.M."/>
            <person name="Carvalho C.M.B."/>
            <person name="Cascardo J.C.M."/>
            <person name="Cavada B.S."/>
            <person name="Chueire L.M.O."/>
            <person name="Creczynski-Pasa T.B."/>
            <person name="Cunha-Junior N.C."/>
            <person name="Fagundes N."/>
            <person name="Falcao C.L."/>
            <person name="Fantinatti F."/>
            <person name="Farias I.P."/>
            <person name="Felipe M.S.S."/>
            <person name="Ferrari L.P."/>
            <person name="Ferro J.A."/>
            <person name="Ferro M.I.T."/>
            <person name="Franco G.R."/>
            <person name="Freitas N.S.A."/>
            <person name="Furlan L.R."/>
            <person name="Gazzinelli R.T."/>
            <person name="Gomes E.A."/>
            <person name="Goncalves P.R."/>
            <person name="Grangeiro T.B."/>
            <person name="Grattapaglia D."/>
            <person name="Grisard E.C."/>
            <person name="Hanna E.S."/>
            <person name="Jardim S.N."/>
            <person name="Laurino J."/>
            <person name="Leoi L.C.T."/>
            <person name="Lima L.F.A."/>
            <person name="Loureiro M.F."/>
            <person name="Lyra M.C.C.P."/>
            <person name="Madeira H.M.F."/>
            <person name="Manfio G.P."/>
            <person name="Maranhao A.Q."/>
            <person name="Martins W.S."/>
            <person name="di Mauro S.M.Z."/>
            <person name="de Medeiros S.R.B."/>
            <person name="Meissner R.V."/>
            <person name="Moreira M.A.M."/>
            <person name="Nascimento F.F."/>
            <person name="Nicolas M.F."/>
            <person name="Oliveira J.G."/>
            <person name="Oliveira S.C."/>
            <person name="Paixao R.F.C."/>
            <person name="Parente J.A."/>
            <person name="Pedrosa F.O."/>
            <person name="Pena S.D.J."/>
            <person name="Pereira J.O."/>
            <person name="Pereira M."/>
            <person name="Pinto L.S.R.C."/>
            <person name="Pinto L.S."/>
            <person name="Porto J.I.R."/>
            <person name="Potrich D.P."/>
            <person name="Ramalho-Neto C.E."/>
            <person name="Reis A.M.M."/>
            <person name="Rigo L.U."/>
            <person name="Rondinelli E."/>
            <person name="Santos E.B.P."/>
            <person name="Santos F.R."/>
            <person name="Schneider M.P.C."/>
            <person name="Seuanez H.N."/>
            <person name="Silva A.M.R."/>
            <person name="da Silva A.L.C."/>
            <person name="Silva D.W."/>
            <person name="Silva R."/>
            <person name="Simoes I.C."/>
            <person name="Simon D."/>
            <person name="Soares C.M.A."/>
            <person name="Soares R.B.A."/>
            <person name="Souza E.M."/>
            <person name="Souza K.R.L."/>
            <person name="Souza R.C."/>
            <person name="Steffens M.B.R."/>
            <person name="Steindel M."/>
            <person name="Teixeira S.R."/>
            <person name="Urmenyi T."/>
            <person name="Vettore A."/>
            <person name="Wassem R."/>
            <person name="Zaha A."/>
            <person name="Simpson A.J.G."/>
        </authorList>
    </citation>
    <scope>NUCLEOTIDE SEQUENCE [LARGE SCALE GENOMIC DNA]</scope>
    <source>
        <strain>ATCC 12472 / DSM 30191 / JCM 1249 / CCUG 213 / NBRC 12614 / NCIMB 9131 / NCTC 9757 / MK</strain>
    </source>
</reference>
<evidence type="ECO:0000255" key="1">
    <source>
        <dbReference type="HAMAP-Rule" id="MF_01411"/>
    </source>
</evidence>
<evidence type="ECO:0000305" key="2"/>
<comment type="function">
    <text evidence="1">Together with LptE, is involved in the assembly of lipopolysaccharide (LPS) at the surface of the outer membrane.</text>
</comment>
<comment type="subunit">
    <text evidence="1">Component of the lipopolysaccharide transport and assembly complex. Interacts with LptE and LptA.</text>
</comment>
<comment type="subcellular location">
    <subcellularLocation>
        <location evidence="1">Cell outer membrane</location>
    </subcellularLocation>
</comment>
<comment type="similarity">
    <text evidence="1">Belongs to the LptD family.</text>
</comment>
<comment type="sequence caution" evidence="2">
    <conflict type="erroneous initiation">
        <sequence resource="EMBL-CDS" id="AAQ61889"/>
    </conflict>
</comment>
<keyword id="KW-0998">Cell outer membrane</keyword>
<keyword id="KW-0472">Membrane</keyword>
<keyword id="KW-1185">Reference proteome</keyword>
<keyword id="KW-0732">Signal</keyword>
<sequence length="785" mass="88682">MSCSCLCMSLYRGADRIGRFYTAHCPQDMALCMHRQKLNPLALALAAAFALNAPAALADDEEPPIAVPAPPKEPGQTVVHADDMDGEMSVILHAKGNVVATRDDQRVESDWLDYYQTKNRVKAGDRFRMTRGGDVITGTTLDYNVDTYSGTGMDPVFSMARQNQTAVKPAPGAPPAKPVTLRGDGSQVDFQGQNQYRVYGSRMTTCDPGDEAWYLKSSRTDLDYNTGVGVAHNAWMQFYGVPILYSPWLDFPLNSNRKSGFLMPTFKTGSSGTEFSLPYYWNIAPNYDATITPHINVKHGNMLAGEFRYLQPDYSGRIYTEQLPKDKLTGESRYAWSASHSQNFGHGLSFGMDFNQVSDNNYFTDFGDQVAIASNVNLNREAWLNYALGWQGGGGNVTLRAQRYQNLTINPVPGDIPYAKMPQLTFNANQSLPSGFSANLISDLTRFDHPSLQNAERLVLYPSVSWNFDRSWGFLRPKLGVNYTHYNLDAFQGSPSHVQTRTLPIFSTDAGLYFDRDTQFLGRDHLMTLEPRLFYVNIPNNRDQNSLPMFDTSVNDINFAQLFTENRYSGYDRINGANQITTALTSRFIDQSNGLERLRLAVGKRFYLKDDVTQTVNQPSSDLLLSAGGDLTREWRFDSSYQYNQQLGMTERYNAQLRYNPAAGKIASVRYRFGRYEQLDNSNNYGPMRQVDVAAQWPIARRWYAIGRYNYSFIERKPIERLAGFEYNDGCWSLRMYSQRYVTDPTTTKNAWFFQLELKGLGALGNNGVQDTLRLAVPGYTKINE</sequence>
<name>LPTD_CHRVO</name>
<feature type="signal peptide" evidence="1">
    <location>
        <begin position="1"/>
        <end position="58"/>
    </location>
</feature>
<feature type="chain" id="PRO_0000281598" description="LPS-assembly protein LptD">
    <location>
        <begin position="59"/>
        <end position="785"/>
    </location>
</feature>
<organism>
    <name type="scientific">Chromobacterium violaceum (strain ATCC 12472 / DSM 30191 / JCM 1249 / CCUG 213 / NBRC 12614 / NCIMB 9131 / NCTC 9757 / MK)</name>
    <dbReference type="NCBI Taxonomy" id="243365"/>
    <lineage>
        <taxon>Bacteria</taxon>
        <taxon>Pseudomonadati</taxon>
        <taxon>Pseudomonadota</taxon>
        <taxon>Betaproteobacteria</taxon>
        <taxon>Neisseriales</taxon>
        <taxon>Chromobacteriaceae</taxon>
        <taxon>Chromobacterium</taxon>
    </lineage>
</organism>